<evidence type="ECO:0000250" key="1">
    <source>
        <dbReference type="UniProtKB" id="P0DP23"/>
    </source>
</evidence>
<evidence type="ECO:0000255" key="2">
    <source>
        <dbReference type="PROSITE-ProRule" id="PRU00448"/>
    </source>
</evidence>
<evidence type="ECO:0000305" key="3"/>
<evidence type="ECO:0007829" key="4">
    <source>
        <dbReference type="PDB" id="2M3S"/>
    </source>
</evidence>
<evidence type="ECO:0007829" key="5">
    <source>
        <dbReference type="PDB" id="2O5G"/>
    </source>
</evidence>
<gene>
    <name type="primary">CALM</name>
    <name type="synonym">CAM</name>
    <name type="ORF">RCJMB04_24e7</name>
</gene>
<organism>
    <name type="scientific">Gallus gallus</name>
    <name type="common">Chicken</name>
    <dbReference type="NCBI Taxonomy" id="9031"/>
    <lineage>
        <taxon>Eukaryota</taxon>
        <taxon>Metazoa</taxon>
        <taxon>Chordata</taxon>
        <taxon>Craniata</taxon>
        <taxon>Vertebrata</taxon>
        <taxon>Euteleostomi</taxon>
        <taxon>Archelosauria</taxon>
        <taxon>Archosauria</taxon>
        <taxon>Dinosauria</taxon>
        <taxon>Saurischia</taxon>
        <taxon>Theropoda</taxon>
        <taxon>Coelurosauria</taxon>
        <taxon>Aves</taxon>
        <taxon>Neognathae</taxon>
        <taxon>Galloanserae</taxon>
        <taxon>Galliformes</taxon>
        <taxon>Phasianidae</taxon>
        <taxon>Phasianinae</taxon>
        <taxon>Gallus</taxon>
    </lineage>
</organism>
<name>CALM_CHICK</name>
<feature type="initiator methionine" description="Removed" evidence="1">
    <location>
        <position position="1"/>
    </location>
</feature>
<feature type="chain" id="PRO_0000198230" description="Calmodulin">
    <location>
        <begin position="2"/>
        <end position="149"/>
    </location>
</feature>
<feature type="domain" description="EF-hand 1" evidence="2">
    <location>
        <begin position="8"/>
        <end position="43"/>
    </location>
</feature>
<feature type="domain" description="EF-hand 2" evidence="2">
    <location>
        <begin position="44"/>
        <end position="79"/>
    </location>
</feature>
<feature type="domain" description="EF-hand 3" evidence="2">
    <location>
        <begin position="81"/>
        <end position="116"/>
    </location>
</feature>
<feature type="domain" description="EF-hand 4" evidence="2">
    <location>
        <begin position="117"/>
        <end position="149"/>
    </location>
</feature>
<feature type="binding site" evidence="2">
    <location>
        <position position="21"/>
    </location>
    <ligand>
        <name>Ca(2+)</name>
        <dbReference type="ChEBI" id="CHEBI:29108"/>
        <label>1</label>
    </ligand>
</feature>
<feature type="binding site" evidence="2">
    <location>
        <position position="23"/>
    </location>
    <ligand>
        <name>Ca(2+)</name>
        <dbReference type="ChEBI" id="CHEBI:29108"/>
        <label>1</label>
    </ligand>
</feature>
<feature type="binding site" evidence="2">
    <location>
        <position position="25"/>
    </location>
    <ligand>
        <name>Ca(2+)</name>
        <dbReference type="ChEBI" id="CHEBI:29108"/>
        <label>1</label>
    </ligand>
</feature>
<feature type="binding site" evidence="2">
    <location>
        <position position="27"/>
    </location>
    <ligand>
        <name>Ca(2+)</name>
        <dbReference type="ChEBI" id="CHEBI:29108"/>
        <label>1</label>
    </ligand>
</feature>
<feature type="binding site" evidence="2">
    <location>
        <position position="32"/>
    </location>
    <ligand>
        <name>Ca(2+)</name>
        <dbReference type="ChEBI" id="CHEBI:29108"/>
        <label>1</label>
    </ligand>
</feature>
<feature type="binding site" evidence="2">
    <location>
        <position position="57"/>
    </location>
    <ligand>
        <name>Ca(2+)</name>
        <dbReference type="ChEBI" id="CHEBI:29108"/>
        <label>2</label>
    </ligand>
</feature>
<feature type="binding site" evidence="2">
    <location>
        <position position="59"/>
    </location>
    <ligand>
        <name>Ca(2+)</name>
        <dbReference type="ChEBI" id="CHEBI:29108"/>
        <label>2</label>
    </ligand>
</feature>
<feature type="binding site" evidence="2">
    <location>
        <position position="61"/>
    </location>
    <ligand>
        <name>Ca(2+)</name>
        <dbReference type="ChEBI" id="CHEBI:29108"/>
        <label>2</label>
    </ligand>
</feature>
<feature type="binding site" evidence="2">
    <location>
        <position position="63"/>
    </location>
    <ligand>
        <name>Ca(2+)</name>
        <dbReference type="ChEBI" id="CHEBI:29108"/>
        <label>2</label>
    </ligand>
</feature>
<feature type="binding site" evidence="2">
    <location>
        <position position="68"/>
    </location>
    <ligand>
        <name>Ca(2+)</name>
        <dbReference type="ChEBI" id="CHEBI:29108"/>
        <label>2</label>
    </ligand>
</feature>
<feature type="binding site" evidence="2">
    <location>
        <position position="94"/>
    </location>
    <ligand>
        <name>Ca(2+)</name>
        <dbReference type="ChEBI" id="CHEBI:29108"/>
        <label>3</label>
    </ligand>
</feature>
<feature type="binding site" evidence="2">
    <location>
        <position position="96"/>
    </location>
    <ligand>
        <name>Ca(2+)</name>
        <dbReference type="ChEBI" id="CHEBI:29108"/>
        <label>3</label>
    </ligand>
</feature>
<feature type="binding site" evidence="2">
    <location>
        <position position="98"/>
    </location>
    <ligand>
        <name>Ca(2+)</name>
        <dbReference type="ChEBI" id="CHEBI:29108"/>
        <label>3</label>
    </ligand>
</feature>
<feature type="binding site" evidence="2">
    <location>
        <position position="100"/>
    </location>
    <ligand>
        <name>Ca(2+)</name>
        <dbReference type="ChEBI" id="CHEBI:29108"/>
        <label>3</label>
    </ligand>
</feature>
<feature type="binding site" evidence="2">
    <location>
        <position position="105"/>
    </location>
    <ligand>
        <name>Ca(2+)</name>
        <dbReference type="ChEBI" id="CHEBI:29108"/>
        <label>3</label>
    </ligand>
</feature>
<feature type="binding site" evidence="2">
    <location>
        <position position="130"/>
    </location>
    <ligand>
        <name>Ca(2+)</name>
        <dbReference type="ChEBI" id="CHEBI:29108"/>
        <label>4</label>
    </ligand>
</feature>
<feature type="binding site" evidence="2">
    <location>
        <position position="132"/>
    </location>
    <ligand>
        <name>Ca(2+)</name>
        <dbReference type="ChEBI" id="CHEBI:29108"/>
        <label>4</label>
    </ligand>
</feature>
<feature type="binding site" evidence="2">
    <location>
        <position position="134"/>
    </location>
    <ligand>
        <name>Ca(2+)</name>
        <dbReference type="ChEBI" id="CHEBI:29108"/>
        <label>4</label>
    </ligand>
</feature>
<feature type="binding site" evidence="2">
    <location>
        <position position="136"/>
    </location>
    <ligand>
        <name>Ca(2+)</name>
        <dbReference type="ChEBI" id="CHEBI:29108"/>
        <label>4</label>
    </ligand>
</feature>
<feature type="binding site" evidence="2">
    <location>
        <position position="141"/>
    </location>
    <ligand>
        <name>Ca(2+)</name>
        <dbReference type="ChEBI" id="CHEBI:29108"/>
        <label>4</label>
    </ligand>
</feature>
<feature type="modified residue" description="N-acetylalanine" evidence="1">
    <location>
        <position position="2"/>
    </location>
</feature>
<feature type="modified residue" description="N6,N6,N6-trimethyllysine" evidence="1">
    <location>
        <position position="116"/>
    </location>
</feature>
<feature type="turn" evidence="4">
    <location>
        <begin position="2"/>
        <end position="4"/>
    </location>
</feature>
<feature type="helix" evidence="5">
    <location>
        <begin position="7"/>
        <end position="20"/>
    </location>
</feature>
<feature type="strand" evidence="5">
    <location>
        <begin position="25"/>
        <end position="28"/>
    </location>
</feature>
<feature type="helix" evidence="5">
    <location>
        <begin position="30"/>
        <end position="39"/>
    </location>
</feature>
<feature type="helix" evidence="5">
    <location>
        <begin position="46"/>
        <end position="56"/>
    </location>
</feature>
<feature type="strand" evidence="5">
    <location>
        <begin position="61"/>
        <end position="65"/>
    </location>
</feature>
<feature type="helix" evidence="5">
    <location>
        <begin position="66"/>
        <end position="74"/>
    </location>
</feature>
<feature type="turn" evidence="4">
    <location>
        <begin position="79"/>
        <end position="81"/>
    </location>
</feature>
<feature type="helix" evidence="5">
    <location>
        <begin position="82"/>
        <end position="93"/>
    </location>
</feature>
<feature type="strand" evidence="5">
    <location>
        <begin position="98"/>
        <end position="101"/>
    </location>
</feature>
<feature type="helix" evidence="5">
    <location>
        <begin position="103"/>
        <end position="112"/>
    </location>
</feature>
<feature type="helix" evidence="5">
    <location>
        <begin position="119"/>
        <end position="129"/>
    </location>
</feature>
<feature type="strand" evidence="5">
    <location>
        <begin position="134"/>
        <end position="138"/>
    </location>
</feature>
<feature type="helix" evidence="5">
    <location>
        <begin position="139"/>
        <end position="145"/>
    </location>
</feature>
<comment type="function">
    <text evidence="1">Calmodulin acts as part of a calcium signal transduction pathway by mediating the control of a large number of enzymes, ion channels, aquaporins and other proteins through calcium-binding. Calcium-binding is required for the activation of calmodulin. Among the enzymes to be stimulated by the calmodulin-calcium complex are a number of protein kinases, such as myosin light-chain kinases and calmodulin-dependent protein kinase type II (CaMK2), and phosphatases.</text>
</comment>
<comment type="miscellaneous">
    <text>This protein has four functional calcium-binding sites.</text>
</comment>
<comment type="similarity">
    <text evidence="3">Belongs to the calmodulin family.</text>
</comment>
<proteinExistence type="evidence at protein level"/>
<dbReference type="EMBL" id="L00101">
    <property type="protein sequence ID" value="AAA48653.1"/>
    <property type="molecule type" value="Genomic_DNA"/>
</dbReference>
<dbReference type="EMBL" id="L00096">
    <property type="protein sequence ID" value="AAA48653.1"/>
    <property type="status" value="JOINED"/>
    <property type="molecule type" value="Genomic_DNA"/>
</dbReference>
<dbReference type="EMBL" id="L00097">
    <property type="protein sequence ID" value="AAA48653.1"/>
    <property type="status" value="JOINED"/>
    <property type="molecule type" value="Genomic_DNA"/>
</dbReference>
<dbReference type="EMBL" id="L00098">
    <property type="protein sequence ID" value="AAA48653.1"/>
    <property type="status" value="JOINED"/>
    <property type="molecule type" value="Genomic_DNA"/>
</dbReference>
<dbReference type="EMBL" id="L00099">
    <property type="protein sequence ID" value="AAA48653.1"/>
    <property type="status" value="JOINED"/>
    <property type="molecule type" value="Genomic_DNA"/>
</dbReference>
<dbReference type="EMBL" id="L00100">
    <property type="protein sequence ID" value="AAA48653.1"/>
    <property type="status" value="JOINED"/>
    <property type="molecule type" value="Genomic_DNA"/>
</dbReference>
<dbReference type="EMBL" id="M36167">
    <property type="protein sequence ID" value="AAA48650.1"/>
    <property type="molecule type" value="mRNA"/>
</dbReference>
<dbReference type="EMBL" id="AJ720728">
    <property type="protein sequence ID" value="CAG32387.1"/>
    <property type="molecule type" value="mRNA"/>
</dbReference>
<dbReference type="PIR" id="A92394">
    <property type="entry name" value="MCCH"/>
</dbReference>
<dbReference type="RefSeq" id="NP_001103834.1">
    <property type="nucleotide sequence ID" value="NM_001110364.1"/>
</dbReference>
<dbReference type="RefSeq" id="NP_990336.1">
    <property type="nucleotide sequence ID" value="NM_205005.1"/>
</dbReference>
<dbReference type="PDB" id="1AHR">
    <property type="method" value="X-ray"/>
    <property type="resolution" value="1.80 A"/>
    <property type="chains" value="A=2-149"/>
</dbReference>
<dbReference type="PDB" id="1UP5">
    <property type="method" value="X-ray"/>
    <property type="resolution" value="1.90 A"/>
    <property type="chains" value="A/B=2-149"/>
</dbReference>
<dbReference type="PDB" id="2BCX">
    <property type="method" value="X-ray"/>
    <property type="resolution" value="2.00 A"/>
    <property type="chains" value="A=2-149"/>
</dbReference>
<dbReference type="PDB" id="2BKI">
    <property type="method" value="X-ray"/>
    <property type="resolution" value="2.90 A"/>
    <property type="chains" value="B/D=2-149"/>
</dbReference>
<dbReference type="PDB" id="2KZ2">
    <property type="method" value="NMR"/>
    <property type="chains" value="A=77-149"/>
</dbReference>
<dbReference type="PDB" id="2M3S">
    <property type="method" value="NMR"/>
    <property type="chains" value="A=1-149"/>
</dbReference>
<dbReference type="PDB" id="2O5G">
    <property type="method" value="X-ray"/>
    <property type="resolution" value="1.08 A"/>
    <property type="chains" value="A=2-149"/>
</dbReference>
<dbReference type="PDB" id="2O60">
    <property type="method" value="X-ray"/>
    <property type="resolution" value="1.55 A"/>
    <property type="chains" value="A=2-149"/>
</dbReference>
<dbReference type="PDB" id="2VB6">
    <property type="method" value="X-ray"/>
    <property type="resolution" value="2.30 A"/>
    <property type="chains" value="B=1-149"/>
</dbReference>
<dbReference type="PDB" id="3GOF">
    <property type="method" value="X-ray"/>
    <property type="resolution" value="1.45 A"/>
    <property type="chains" value="A/B=2-149"/>
</dbReference>
<dbReference type="PDB" id="3GP2">
    <property type="method" value="X-ray"/>
    <property type="resolution" value="1.46 A"/>
    <property type="chains" value="A=2-148"/>
</dbReference>
<dbReference type="PDB" id="4BYA">
    <property type="method" value="NMR"/>
    <property type="chains" value="A=77-149"/>
</dbReference>
<dbReference type="PDB" id="5HIT">
    <property type="method" value="X-ray"/>
    <property type="resolution" value="2.85 A"/>
    <property type="chains" value="A=2-148"/>
</dbReference>
<dbReference type="PDB" id="6BNV">
    <property type="method" value="EM"/>
    <property type="resolution" value="4.60 A"/>
    <property type="chains" value="O/P/Q/R/S/T=4-148"/>
</dbReference>
<dbReference type="PDBsum" id="1AHR"/>
<dbReference type="PDBsum" id="1UP5"/>
<dbReference type="PDBsum" id="2BCX"/>
<dbReference type="PDBsum" id="2BKI"/>
<dbReference type="PDBsum" id="2KZ2"/>
<dbReference type="PDBsum" id="2M3S"/>
<dbReference type="PDBsum" id="2O5G"/>
<dbReference type="PDBsum" id="2O60"/>
<dbReference type="PDBsum" id="2VB6"/>
<dbReference type="PDBsum" id="3GOF"/>
<dbReference type="PDBsum" id="3GP2"/>
<dbReference type="PDBsum" id="4BYA"/>
<dbReference type="PDBsum" id="5HIT"/>
<dbReference type="PDBsum" id="6BNV"/>
<dbReference type="BMRB" id="P62149"/>
<dbReference type="SMR" id="P62149"/>
<dbReference type="DIP" id="DIP-29154N"/>
<dbReference type="ELM" id="P62149"/>
<dbReference type="FunCoup" id="P62149">
    <property type="interactions" value="2066"/>
</dbReference>
<dbReference type="IntAct" id="P62149">
    <property type="interactions" value="1"/>
</dbReference>
<dbReference type="STRING" id="9031.ENSGALP00000046870"/>
<dbReference type="iPTMnet" id="P62149"/>
<dbReference type="MetOSite" id="P62149"/>
<dbReference type="PaxDb" id="9031-ENSGALP00000016260"/>
<dbReference type="GeneID" id="395855"/>
<dbReference type="KEGG" id="gga:395855"/>
<dbReference type="KEGG" id="gga:396523"/>
<dbReference type="CTD" id="801"/>
<dbReference type="CTD" id="805"/>
<dbReference type="VEuPathDB" id="HostDB:geneid_396523"/>
<dbReference type="eggNOG" id="KOG0027">
    <property type="taxonomic scope" value="Eukaryota"/>
</dbReference>
<dbReference type="HOGENOM" id="CLU_061288_2_0_1"/>
<dbReference type="InParanoid" id="P62149"/>
<dbReference type="OMA" id="ARKMKEC"/>
<dbReference type="OrthoDB" id="26525at2759"/>
<dbReference type="TreeFam" id="TF300912"/>
<dbReference type="EvolutionaryTrace" id="P62149"/>
<dbReference type="PRO" id="PR:P62149"/>
<dbReference type="Proteomes" id="UP000000539">
    <property type="component" value="Chromosome 3"/>
</dbReference>
<dbReference type="Proteomes" id="UP000000539">
    <property type="component" value="Chromosome 5"/>
</dbReference>
<dbReference type="Bgee" id="ENSGALG00000010023">
    <property type="expression patterns" value="Expressed in spermatid and 14 other cell types or tissues"/>
</dbReference>
<dbReference type="GO" id="GO:0005813">
    <property type="term" value="C:centrosome"/>
    <property type="evidence" value="ECO:0000318"/>
    <property type="project" value="GO_Central"/>
</dbReference>
<dbReference type="GO" id="GO:0005737">
    <property type="term" value="C:cytoplasm"/>
    <property type="evidence" value="ECO:0000318"/>
    <property type="project" value="GO_Central"/>
</dbReference>
<dbReference type="GO" id="GO:0043209">
    <property type="term" value="C:myelin sheath"/>
    <property type="evidence" value="ECO:0000318"/>
    <property type="project" value="GO_Central"/>
</dbReference>
<dbReference type="GO" id="GO:0032991">
    <property type="term" value="C:protein-containing complex"/>
    <property type="evidence" value="ECO:0000314"/>
    <property type="project" value="CAFA"/>
</dbReference>
<dbReference type="GO" id="GO:0005509">
    <property type="term" value="F:calcium ion binding"/>
    <property type="evidence" value="ECO:0000314"/>
    <property type="project" value="CAFA"/>
</dbReference>
<dbReference type="GO" id="GO:0051401">
    <property type="term" value="F:CH domain binding"/>
    <property type="evidence" value="ECO:0000353"/>
    <property type="project" value="CAFA"/>
</dbReference>
<dbReference type="GO" id="GO:0097718">
    <property type="term" value="F:disordered domain specific binding"/>
    <property type="evidence" value="ECO:0000353"/>
    <property type="project" value="CAFA"/>
</dbReference>
<dbReference type="GO" id="GO:0017022">
    <property type="term" value="F:myosin binding"/>
    <property type="evidence" value="ECO:0000353"/>
    <property type="project" value="UniProtKB"/>
</dbReference>
<dbReference type="CDD" id="cd00051">
    <property type="entry name" value="EFh"/>
    <property type="match status" value="2"/>
</dbReference>
<dbReference type="FunFam" id="1.10.238.10:FF:000527">
    <property type="entry name" value="Calmodulin-3"/>
    <property type="match status" value="1"/>
</dbReference>
<dbReference type="Gene3D" id="1.10.238.10">
    <property type="entry name" value="EF-hand"/>
    <property type="match status" value="3"/>
</dbReference>
<dbReference type="InterPro" id="IPR050230">
    <property type="entry name" value="CALM/Myosin/TropC-like"/>
</dbReference>
<dbReference type="InterPro" id="IPR011992">
    <property type="entry name" value="EF-hand-dom_pair"/>
</dbReference>
<dbReference type="InterPro" id="IPR018247">
    <property type="entry name" value="EF_Hand_1_Ca_BS"/>
</dbReference>
<dbReference type="InterPro" id="IPR002048">
    <property type="entry name" value="EF_hand_dom"/>
</dbReference>
<dbReference type="PANTHER" id="PTHR23048:SF0">
    <property type="entry name" value="CALMODULIN LIKE 3"/>
    <property type="match status" value="1"/>
</dbReference>
<dbReference type="PANTHER" id="PTHR23048">
    <property type="entry name" value="MYOSIN LIGHT CHAIN 1, 3"/>
    <property type="match status" value="1"/>
</dbReference>
<dbReference type="Pfam" id="PF13499">
    <property type="entry name" value="EF-hand_7"/>
    <property type="match status" value="2"/>
</dbReference>
<dbReference type="PRINTS" id="PR00450">
    <property type="entry name" value="RECOVERIN"/>
</dbReference>
<dbReference type="SMART" id="SM00054">
    <property type="entry name" value="EFh"/>
    <property type="match status" value="4"/>
</dbReference>
<dbReference type="SUPFAM" id="SSF47473">
    <property type="entry name" value="EF-hand"/>
    <property type="match status" value="1"/>
</dbReference>
<dbReference type="PROSITE" id="PS00018">
    <property type="entry name" value="EF_HAND_1"/>
    <property type="match status" value="4"/>
</dbReference>
<dbReference type="PROSITE" id="PS50222">
    <property type="entry name" value="EF_HAND_2"/>
    <property type="match status" value="4"/>
</dbReference>
<accession>P62149</accession>
<accession>P02593</accession>
<accession>P70667</accession>
<accession>P99014</accession>
<accession>Q5ZIQ6</accession>
<accession>Q61379</accession>
<accession>Q61380</accession>
<protein>
    <recommendedName>
        <fullName>Calmodulin</fullName>
        <shortName>CaM</shortName>
    </recommendedName>
</protein>
<reference key="1">
    <citation type="journal article" date="1983" name="J. Biol. Chem.">
        <title>Chicken calmodulin genes. A species comparison of cDNA sequences and isolation of a genomic clone.</title>
        <authorList>
            <person name="Putkey J.A."/>
            <person name="Ts'Ui K.F."/>
            <person name="Tanaka T."/>
            <person name="Lagace L."/>
            <person name="Stein J.P."/>
            <person name="Lai E.C."/>
            <person name="Means A.R."/>
        </authorList>
    </citation>
    <scope>NUCLEOTIDE SEQUENCE [GENOMIC DNA]</scope>
</reference>
<reference key="2">
    <citation type="journal article" date="1985" name="J. Biol. Chem.">
        <title>The structural organization of the chicken calmodulin gene.</title>
        <authorList>
            <person name="Simmen R.C.M."/>
            <person name="Tanaka T."/>
            <person name="Ts'Ui K.F."/>
            <person name="Putkey J.A."/>
            <person name="Scott M.J."/>
            <person name="Lai E.C."/>
            <person name="Means A.R."/>
        </authorList>
    </citation>
    <scope>NUCLEOTIDE SEQUENCE [GENOMIC DNA]</scope>
</reference>
<reference key="3">
    <citation type="journal article" date="1987" name="J. Biol. Chem.">
        <authorList>
            <person name="Simmen R.C.M."/>
            <person name="Tanaka T."/>
            <person name="Ts'Ui K.F."/>
            <person name="Putkey J.A."/>
            <person name="Scott M.J."/>
            <person name="Lai E.C."/>
            <person name="Means A.R."/>
        </authorList>
    </citation>
    <scope>ERRATUM OF PUBMED:2981850</scope>
</reference>
<reference key="4">
    <citation type="journal article" date="1984" name="Bull. Chem. Soc. Jpn.">
        <title>cDNA sequences and molecular evolution of calmodulin genes of chicken and eel.</title>
        <authorList>
            <person name="Iida Y."/>
        </authorList>
    </citation>
    <scope>NUCLEOTIDE SEQUENCE [MRNA]</scope>
</reference>
<reference key="5">
    <citation type="journal article" date="2005" name="Genome Biol.">
        <title>Full-length cDNAs from chicken bursal lymphocytes to facilitate gene function analysis.</title>
        <authorList>
            <person name="Caldwell R.B."/>
            <person name="Kierzek A.M."/>
            <person name="Arakawa H."/>
            <person name="Bezzubov Y."/>
            <person name="Zaim J."/>
            <person name="Fiedler P."/>
            <person name="Kutter S."/>
            <person name="Blagodatski A."/>
            <person name="Kostovska D."/>
            <person name="Koter M."/>
            <person name="Plachy J."/>
            <person name="Carninci P."/>
            <person name="Hayashizaki Y."/>
            <person name="Buerstedde J.-M."/>
        </authorList>
    </citation>
    <scope>NUCLEOTIDE SEQUENCE [LARGE SCALE MRNA]</scope>
    <source>
        <strain>CB</strain>
        <tissue>Bursa of Fabricius</tissue>
    </source>
</reference>
<reference key="6">
    <citation type="journal article" date="1997" name="Structure">
        <title>The structure of a calmodulin mutant with a deletion in the central helix: implications for molecular recognition and protein binding.</title>
        <authorList>
            <person name="Tabernero L."/>
            <person name="Taylor D.A."/>
            <person name="Chandross R.J."/>
            <person name="VanBerkum M.F.A."/>
            <person name="Means A.R."/>
            <person name="Quiocho F.A."/>
            <person name="Sack J.S."/>
        </authorList>
    </citation>
    <scope>X-RAY CRYSTALLOGRAPHY (1.8 ANGSTROMS)</scope>
</reference>
<keyword id="KW-0002">3D-structure</keyword>
<keyword id="KW-0007">Acetylation</keyword>
<keyword id="KW-0106">Calcium</keyword>
<keyword id="KW-0479">Metal-binding</keyword>
<keyword id="KW-0488">Methylation</keyword>
<keyword id="KW-1185">Reference proteome</keyword>
<keyword id="KW-0677">Repeat</keyword>
<sequence length="149" mass="16838">MADQLTEEQIAEFKEAFSLFDKDGDGTITTKELGTVMRSLGQNPTEAELQDMINEVDADGNGTIDFPEFLTMMARKMKDTDSEEEIREAFRVFDKDGNGYISAAELRHVMTNLGEKLTDEEVDEMIREADIDGDGQVNYEEFVQMMTAK</sequence>